<keyword id="KW-0004">4Fe-4S</keyword>
<keyword id="KW-0249">Electron transport</keyword>
<keyword id="KW-0408">Iron</keyword>
<keyword id="KW-0411">Iron-sulfur</keyword>
<keyword id="KW-0479">Metal-binding</keyword>
<keyword id="KW-0677">Repeat</keyword>
<keyword id="KW-0813">Transport</keyword>
<name>LUTB_ANOFW</name>
<feature type="chain" id="PRO_0000383957" description="Lactate utilization protein B">
    <location>
        <begin position="1"/>
        <end position="472"/>
    </location>
</feature>
<feature type="domain" description="4Fe-4S ferredoxin-type 1" evidence="1">
    <location>
        <begin position="304"/>
        <end position="334"/>
    </location>
</feature>
<feature type="domain" description="4Fe-4S ferredoxin-type 2" evidence="1">
    <location>
        <begin position="353"/>
        <end position="382"/>
    </location>
</feature>
<feature type="binding site" evidence="1">
    <location>
        <position position="313"/>
    </location>
    <ligand>
        <name>[4Fe-4S] cluster</name>
        <dbReference type="ChEBI" id="CHEBI:49883"/>
        <label>1</label>
    </ligand>
</feature>
<feature type="binding site" evidence="1">
    <location>
        <position position="316"/>
    </location>
    <ligand>
        <name>[4Fe-4S] cluster</name>
        <dbReference type="ChEBI" id="CHEBI:49883"/>
        <label>1</label>
    </ligand>
</feature>
<feature type="binding site" evidence="1">
    <location>
        <position position="319"/>
    </location>
    <ligand>
        <name>[4Fe-4S] cluster</name>
        <dbReference type="ChEBI" id="CHEBI:49883"/>
        <label>1</label>
    </ligand>
</feature>
<feature type="binding site" evidence="1">
    <location>
        <position position="323"/>
    </location>
    <ligand>
        <name>[4Fe-4S] cluster</name>
        <dbReference type="ChEBI" id="CHEBI:49883"/>
        <label>2</label>
    </ligand>
</feature>
<feature type="binding site" evidence="1">
    <location>
        <position position="366"/>
    </location>
    <ligand>
        <name>[4Fe-4S] cluster</name>
        <dbReference type="ChEBI" id="CHEBI:49883"/>
        <label>2</label>
    </ligand>
</feature>
<feature type="binding site" evidence="1">
    <location>
        <position position="369"/>
    </location>
    <ligand>
        <name>[4Fe-4S] cluster</name>
        <dbReference type="ChEBI" id="CHEBI:49883"/>
        <label>2</label>
    </ligand>
</feature>
<feature type="binding site" evidence="1">
    <location>
        <position position="373"/>
    </location>
    <ligand>
        <name>[4Fe-4S] cluster</name>
        <dbReference type="ChEBI" id="CHEBI:49883"/>
        <label>1</label>
    </ligand>
</feature>
<protein>
    <recommendedName>
        <fullName evidence="1">Lactate utilization protein B</fullName>
    </recommendedName>
</protein>
<reference key="1">
    <citation type="journal article" date="2008" name="Genome Biol.">
        <title>Encapsulated in silica: genome, proteome and physiology of the thermophilic bacterium Anoxybacillus flavithermus WK1.</title>
        <authorList>
            <person name="Saw J.H."/>
            <person name="Mountain B.W."/>
            <person name="Feng L."/>
            <person name="Omelchenko M.V."/>
            <person name="Hou S."/>
            <person name="Saito J.A."/>
            <person name="Stott M.B."/>
            <person name="Li D."/>
            <person name="Zhao G."/>
            <person name="Wu J."/>
            <person name="Galperin M.Y."/>
            <person name="Koonin E.V."/>
            <person name="Makarova K.S."/>
            <person name="Wolf Y.I."/>
            <person name="Rigden D.J."/>
            <person name="Dunfield P.F."/>
            <person name="Wang L."/>
            <person name="Alam M."/>
        </authorList>
    </citation>
    <scope>NUCLEOTIDE SEQUENCE [LARGE SCALE GENOMIC DNA]</scope>
    <source>
        <strain>DSM 21510 / WK1</strain>
    </source>
</reference>
<organism>
    <name type="scientific">Anoxybacillus flavithermus (strain DSM 21510 / WK1)</name>
    <dbReference type="NCBI Taxonomy" id="491915"/>
    <lineage>
        <taxon>Bacteria</taxon>
        <taxon>Bacillati</taxon>
        <taxon>Bacillota</taxon>
        <taxon>Bacilli</taxon>
        <taxon>Bacillales</taxon>
        <taxon>Anoxybacillaceae</taxon>
        <taxon>Anoxybacillus</taxon>
    </lineage>
</organism>
<comment type="function">
    <text evidence="1">Is involved in L-lactate degradation and allows cells to grow with lactate as the sole carbon source. Has probably a role as an electron transporter during oxidation of L-lactate.</text>
</comment>
<comment type="similarity">
    <text evidence="1">Belongs to the LutB/YkgF family.</text>
</comment>
<evidence type="ECO:0000255" key="1">
    <source>
        <dbReference type="HAMAP-Rule" id="MF_02103"/>
    </source>
</evidence>
<proteinExistence type="inferred from homology"/>
<accession>B7GLD5</accession>
<gene>
    <name evidence="1" type="primary">lutB</name>
    <name type="ordered locus">Aflv_2008</name>
</gene>
<sequence length="472" mass="52459">MAMKINTGEFHERVEKGIHNTFMRGAVAGAQERLRTRRLEAAQELGNWEEWRALGEEIRQHTLENLDYYLMQLSENVKKRGGHVFFAQTAEEANDYICRVVASKQAKKIVKSKSMVTEEIHMNAALEKLGCEVIETDLGEYILQVDDHDPPSHIVAPALHKNKEQIRDVFQQKLAYTKTEKPEELALHARAMLRQQYLTADVGITGCNFAVAESGSITLVTNEGNADLVTALPKTQITVMGMERIVPTFEEMEVLVSLLTRSAVGQKLTSYITVLTGPREEGEVDGPEEFHLVIVDNGRSDILGTEFQPVLQCIRCAACVNVCPVYRHIGGHSYGSIYSGPIGAVLSPLLGGYDDYKELPYASTLCAACTEACPVKIPLHELLLKHRQTIVEREGKAPISEKLAMKAFGLGAASSLLYKLGSKIAPTAVNPFTTNDRISKGPGPLKAWTDIREFPAPEKERFRDWLKQRGNE</sequence>
<dbReference type="EMBL" id="CP000922">
    <property type="protein sequence ID" value="ACJ34367.1"/>
    <property type="molecule type" value="Genomic_DNA"/>
</dbReference>
<dbReference type="RefSeq" id="WP_012575554.1">
    <property type="nucleotide sequence ID" value="NC_011567.1"/>
</dbReference>
<dbReference type="STRING" id="491915.Aflv_2008"/>
<dbReference type="GeneID" id="7038260"/>
<dbReference type="KEGG" id="afl:Aflv_2008"/>
<dbReference type="PATRIC" id="fig|491915.6.peg.2061"/>
<dbReference type="eggNOG" id="COG1139">
    <property type="taxonomic scope" value="Bacteria"/>
</dbReference>
<dbReference type="HOGENOM" id="CLU_027059_2_0_9"/>
<dbReference type="Proteomes" id="UP000000742">
    <property type="component" value="Chromosome"/>
</dbReference>
<dbReference type="GO" id="GO:0051539">
    <property type="term" value="F:4 iron, 4 sulfur cluster binding"/>
    <property type="evidence" value="ECO:0007669"/>
    <property type="project" value="UniProtKB-KW"/>
</dbReference>
<dbReference type="GO" id="GO:0046872">
    <property type="term" value="F:metal ion binding"/>
    <property type="evidence" value="ECO:0007669"/>
    <property type="project" value="UniProtKB-KW"/>
</dbReference>
<dbReference type="GO" id="GO:0006089">
    <property type="term" value="P:lactate metabolic process"/>
    <property type="evidence" value="ECO:0007669"/>
    <property type="project" value="UniProtKB-UniRule"/>
</dbReference>
<dbReference type="Gene3D" id="1.10.1060.10">
    <property type="entry name" value="Alpha-helical ferredoxin"/>
    <property type="match status" value="1"/>
</dbReference>
<dbReference type="Gene3D" id="3.40.50.10420">
    <property type="entry name" value="NagB/RpiA/CoA transferase-like"/>
    <property type="match status" value="1"/>
</dbReference>
<dbReference type="HAMAP" id="MF_02103">
    <property type="entry name" value="LutB"/>
    <property type="match status" value="1"/>
</dbReference>
<dbReference type="InterPro" id="IPR017896">
    <property type="entry name" value="4Fe4S_Fe-S-bd"/>
</dbReference>
<dbReference type="InterPro" id="IPR017900">
    <property type="entry name" value="4Fe4S_Fe_S_CS"/>
</dbReference>
<dbReference type="InterPro" id="IPR024185">
    <property type="entry name" value="FTHF_cligase-like_sf"/>
</dbReference>
<dbReference type="InterPro" id="IPR009051">
    <property type="entry name" value="Helical_ferredxn"/>
</dbReference>
<dbReference type="InterPro" id="IPR003741">
    <property type="entry name" value="LUD_dom"/>
</dbReference>
<dbReference type="InterPro" id="IPR022825">
    <property type="entry name" value="LutB"/>
</dbReference>
<dbReference type="InterPro" id="IPR004452">
    <property type="entry name" value="LutB/LldF"/>
</dbReference>
<dbReference type="InterPro" id="IPR024569">
    <property type="entry name" value="LutB_C"/>
</dbReference>
<dbReference type="InterPro" id="IPR037171">
    <property type="entry name" value="NagB/RpiA_transferase-like"/>
</dbReference>
<dbReference type="NCBIfam" id="TIGR00273">
    <property type="entry name" value="LutB/LldF family L-lactate oxidation iron-sulfur protein"/>
    <property type="match status" value="1"/>
</dbReference>
<dbReference type="PANTHER" id="PTHR47153">
    <property type="entry name" value="LACTATE UTILIZATION PROTEIN B"/>
    <property type="match status" value="1"/>
</dbReference>
<dbReference type="PANTHER" id="PTHR47153:SF2">
    <property type="entry name" value="LACTATE UTILIZATION PROTEIN B"/>
    <property type="match status" value="1"/>
</dbReference>
<dbReference type="Pfam" id="PF13183">
    <property type="entry name" value="Fer4_8"/>
    <property type="match status" value="1"/>
</dbReference>
<dbReference type="Pfam" id="PF02589">
    <property type="entry name" value="LUD_dom"/>
    <property type="match status" value="1"/>
</dbReference>
<dbReference type="Pfam" id="PF11870">
    <property type="entry name" value="LutB_C"/>
    <property type="match status" value="1"/>
</dbReference>
<dbReference type="SUPFAM" id="SSF46548">
    <property type="entry name" value="alpha-helical ferredoxin"/>
    <property type="match status" value="1"/>
</dbReference>
<dbReference type="SUPFAM" id="SSF100950">
    <property type="entry name" value="NagB/RpiA/CoA transferase-like"/>
    <property type="match status" value="1"/>
</dbReference>
<dbReference type="PROSITE" id="PS00198">
    <property type="entry name" value="4FE4S_FER_1"/>
    <property type="match status" value="1"/>
</dbReference>
<dbReference type="PROSITE" id="PS51379">
    <property type="entry name" value="4FE4S_FER_2"/>
    <property type="match status" value="1"/>
</dbReference>